<dbReference type="EC" id="7.1.1.-" evidence="1"/>
<dbReference type="EMBL" id="AP009493">
    <property type="protein sequence ID" value="BAG19800.1"/>
    <property type="molecule type" value="Genomic_DNA"/>
</dbReference>
<dbReference type="SMR" id="B1W506"/>
<dbReference type="KEGG" id="sgr:SGR_2971"/>
<dbReference type="eggNOG" id="COG1007">
    <property type="taxonomic scope" value="Bacteria"/>
</dbReference>
<dbReference type="HOGENOM" id="CLU_007100_1_1_11"/>
<dbReference type="Proteomes" id="UP000001685">
    <property type="component" value="Chromosome"/>
</dbReference>
<dbReference type="GO" id="GO:0005886">
    <property type="term" value="C:plasma membrane"/>
    <property type="evidence" value="ECO:0007669"/>
    <property type="project" value="UniProtKB-SubCell"/>
</dbReference>
<dbReference type="GO" id="GO:0008137">
    <property type="term" value="F:NADH dehydrogenase (ubiquinone) activity"/>
    <property type="evidence" value="ECO:0007669"/>
    <property type="project" value="InterPro"/>
</dbReference>
<dbReference type="GO" id="GO:0050136">
    <property type="term" value="F:NADH:ubiquinone reductase (non-electrogenic) activity"/>
    <property type="evidence" value="ECO:0007669"/>
    <property type="project" value="UniProtKB-UniRule"/>
</dbReference>
<dbReference type="GO" id="GO:0048038">
    <property type="term" value="F:quinone binding"/>
    <property type="evidence" value="ECO:0007669"/>
    <property type="project" value="UniProtKB-KW"/>
</dbReference>
<dbReference type="GO" id="GO:0042773">
    <property type="term" value="P:ATP synthesis coupled electron transport"/>
    <property type="evidence" value="ECO:0007669"/>
    <property type="project" value="InterPro"/>
</dbReference>
<dbReference type="HAMAP" id="MF_00445">
    <property type="entry name" value="NDH1_NuoN_1"/>
    <property type="match status" value="1"/>
</dbReference>
<dbReference type="InterPro" id="IPR010096">
    <property type="entry name" value="NADH-Q_OxRdtase_suN/2"/>
</dbReference>
<dbReference type="InterPro" id="IPR001750">
    <property type="entry name" value="ND/Mrp_TM"/>
</dbReference>
<dbReference type="NCBIfam" id="TIGR01770">
    <property type="entry name" value="NDH_I_N"/>
    <property type="match status" value="1"/>
</dbReference>
<dbReference type="NCBIfam" id="NF004441">
    <property type="entry name" value="PRK05777.1-4"/>
    <property type="match status" value="1"/>
</dbReference>
<dbReference type="PANTHER" id="PTHR22773">
    <property type="entry name" value="NADH DEHYDROGENASE"/>
    <property type="match status" value="1"/>
</dbReference>
<dbReference type="Pfam" id="PF00361">
    <property type="entry name" value="Proton_antipo_M"/>
    <property type="match status" value="1"/>
</dbReference>
<accession>B1W506</accession>
<organism>
    <name type="scientific">Streptomyces griseus subsp. griseus (strain JCM 4626 / CBS 651.72 / NBRC 13350 / KCC S-0626 / ISP 5235)</name>
    <dbReference type="NCBI Taxonomy" id="455632"/>
    <lineage>
        <taxon>Bacteria</taxon>
        <taxon>Bacillati</taxon>
        <taxon>Actinomycetota</taxon>
        <taxon>Actinomycetes</taxon>
        <taxon>Kitasatosporales</taxon>
        <taxon>Streptomycetaceae</taxon>
        <taxon>Streptomyces</taxon>
    </lineage>
</organism>
<feature type="chain" id="PRO_0000391231" description="NADH-quinone oxidoreductase subunit N 3">
    <location>
        <begin position="1"/>
        <end position="554"/>
    </location>
</feature>
<feature type="transmembrane region" description="Helical" evidence="1">
    <location>
        <begin position="35"/>
        <end position="55"/>
    </location>
</feature>
<feature type="transmembrane region" description="Helical" evidence="1">
    <location>
        <begin position="65"/>
        <end position="85"/>
    </location>
</feature>
<feature type="transmembrane region" description="Helical" evidence="1">
    <location>
        <begin position="105"/>
        <end position="125"/>
    </location>
</feature>
<feature type="transmembrane region" description="Helical" evidence="1">
    <location>
        <begin position="161"/>
        <end position="181"/>
    </location>
</feature>
<feature type="transmembrane region" description="Helical" evidence="1">
    <location>
        <begin position="187"/>
        <end position="207"/>
    </location>
</feature>
<feature type="transmembrane region" description="Helical" evidence="1">
    <location>
        <begin position="222"/>
        <end position="242"/>
    </location>
</feature>
<feature type="transmembrane region" description="Helical" evidence="1">
    <location>
        <begin position="275"/>
        <end position="295"/>
    </location>
</feature>
<feature type="transmembrane region" description="Helical" evidence="1">
    <location>
        <begin position="322"/>
        <end position="342"/>
    </location>
</feature>
<feature type="transmembrane region" description="Helical" evidence="1">
    <location>
        <begin position="345"/>
        <end position="365"/>
    </location>
</feature>
<feature type="transmembrane region" description="Helical" evidence="1">
    <location>
        <begin position="371"/>
        <end position="391"/>
    </location>
</feature>
<feature type="transmembrane region" description="Helical" evidence="1">
    <location>
        <begin position="398"/>
        <end position="418"/>
    </location>
</feature>
<feature type="transmembrane region" description="Helical" evidence="1">
    <location>
        <begin position="442"/>
        <end position="462"/>
    </location>
</feature>
<feature type="transmembrane region" description="Helical" evidence="1">
    <location>
        <begin position="476"/>
        <end position="496"/>
    </location>
</feature>
<feature type="transmembrane region" description="Helical" evidence="1">
    <location>
        <begin position="525"/>
        <end position="545"/>
    </location>
</feature>
<sequence>MSATAVHSLWTTASGVTSAAPGNSFTAPKIEYTQLMPVLIIVVAAVLGILVEAFVPRRARYHTQLFLTVVAVAGSFAAIVGLAAGGYGTTDAGIVAMGAIAIDGPTLFLQGTILLVAMVALFTFAERRLDPGSNGNRVDSFAAQAGSVPGGEGEKAAVRAGFTTTEVFPLLLFSVAGLLVFPAANDLLTLFIALEVFSLPLYLLCAVARRKRLMSQEAAVKYFLLGAFSSAFLLFGIALLYGYAGSLSYADIANVVDGSVLEIDPALADTMGNDALLLIGGAMILTGLLFKVGAVPFHMWTPDVYQGAPTPVTGFMAAATKVAAFGALLRLLYVALPGLAWDLRPVMWAVAIVTMLGGAIVAITQTDIKRLLAYSSIAHAGFILAGVIAASPEGISSVLFYLLAYSFVTVGAFAVVTLVRDAGGEATHLSKWAGLGRRSPLVAAVFAVFLLAFAGIPLTSGFSGKFAVFKAAAEGGAGALVVVGVLSSAVAAFFYIRVIVLMFFSEPKADGPTVAVPSPLTMTTIAVGVAVTLVLGLAPQYFLDLASQAGVFVR</sequence>
<proteinExistence type="inferred from homology"/>
<evidence type="ECO:0000255" key="1">
    <source>
        <dbReference type="HAMAP-Rule" id="MF_00445"/>
    </source>
</evidence>
<reference key="1">
    <citation type="journal article" date="2008" name="J. Bacteriol.">
        <title>Genome sequence of the streptomycin-producing microorganism Streptomyces griseus IFO 13350.</title>
        <authorList>
            <person name="Ohnishi Y."/>
            <person name="Ishikawa J."/>
            <person name="Hara H."/>
            <person name="Suzuki H."/>
            <person name="Ikenoya M."/>
            <person name="Ikeda H."/>
            <person name="Yamashita A."/>
            <person name="Hattori M."/>
            <person name="Horinouchi S."/>
        </authorList>
    </citation>
    <scope>NUCLEOTIDE SEQUENCE [LARGE SCALE GENOMIC DNA]</scope>
    <source>
        <strain>JCM 4626 / CBS 651.72 / NBRC 13350 / KCC S-0626 / ISP 5235</strain>
    </source>
</reference>
<name>NUON3_STRGG</name>
<protein>
    <recommendedName>
        <fullName evidence="1">NADH-quinone oxidoreductase subunit N 3</fullName>
        <ecNumber evidence="1">7.1.1.-</ecNumber>
    </recommendedName>
    <alternativeName>
        <fullName evidence="1">NADH dehydrogenase I subunit N 3</fullName>
    </alternativeName>
    <alternativeName>
        <fullName evidence="1">NDH-1 subunit N 3</fullName>
    </alternativeName>
</protein>
<gene>
    <name evidence="1" type="primary">nuoN3</name>
    <name type="ordered locus">SGR_2971</name>
</gene>
<keyword id="KW-1003">Cell membrane</keyword>
<keyword id="KW-0472">Membrane</keyword>
<keyword id="KW-0520">NAD</keyword>
<keyword id="KW-0874">Quinone</keyword>
<keyword id="KW-1278">Translocase</keyword>
<keyword id="KW-0812">Transmembrane</keyword>
<keyword id="KW-1133">Transmembrane helix</keyword>
<keyword id="KW-0813">Transport</keyword>
<comment type="function">
    <text evidence="1">NDH-1 shuttles electrons from NADH, via FMN and iron-sulfur (Fe-S) centers, to quinones in the respiratory chain. The immediate electron acceptor for the enzyme in this species is believed to be a menaquinone. Couples the redox reaction to proton translocation (for every two electrons transferred, four hydrogen ions are translocated across the cytoplasmic membrane), and thus conserves the redox energy in a proton gradient.</text>
</comment>
<comment type="catalytic activity">
    <reaction evidence="1">
        <text>a quinone + NADH + 5 H(+)(in) = a quinol + NAD(+) + 4 H(+)(out)</text>
        <dbReference type="Rhea" id="RHEA:57888"/>
        <dbReference type="ChEBI" id="CHEBI:15378"/>
        <dbReference type="ChEBI" id="CHEBI:24646"/>
        <dbReference type="ChEBI" id="CHEBI:57540"/>
        <dbReference type="ChEBI" id="CHEBI:57945"/>
        <dbReference type="ChEBI" id="CHEBI:132124"/>
    </reaction>
</comment>
<comment type="subunit">
    <text evidence="1">NDH-1 is composed of 14 different subunits. Subunits NuoA, H, J, K, L, M, N constitute the membrane sector of the complex.</text>
</comment>
<comment type="subcellular location">
    <subcellularLocation>
        <location evidence="1">Cell membrane</location>
        <topology evidence="1">Multi-pass membrane protein</topology>
    </subcellularLocation>
</comment>
<comment type="similarity">
    <text evidence="1">Belongs to the complex I subunit 2 family.</text>
</comment>